<name>DNAA_BUCAP</name>
<comment type="function">
    <text evidence="1">Plays an essential role in the initiation and regulation of chromosomal replication. ATP-DnaA binds to the origin of replication (oriC) to initiate formation of the DNA replication initiation complex once per cell cycle. Binds the DnaA box (a 9 base pair repeat at the origin) and separates the double-stranded (ds)DNA. Forms a right-handed helical filament on oriC DNA; dsDNA binds to the exterior of the filament while single-stranded (ss)DNA is stabiized in the filament's interior. The ATP-DnaA-oriC complex binds and stabilizes one strand of the AT-rich DNA unwinding element (DUE), permitting loading of DNA polymerase. After initiation quickly degrades to an ADP-DnaA complex that is not apt for DNA replication. Binds acidic phospholipids.</text>
</comment>
<comment type="subunit">
    <text evidence="1">Oligomerizes as a right-handed, spiral filament on DNA at oriC.</text>
</comment>
<comment type="subcellular location">
    <subcellularLocation>
        <location evidence="1">Cytoplasm</location>
    </subcellularLocation>
</comment>
<comment type="domain">
    <text evidence="1">Domain I is involved in oligomerization and binding regulators, domain II is flexibile and of varying length in different bacteria, domain III forms the AAA+ region, while domain IV binds dsDNA.</text>
</comment>
<comment type="similarity">
    <text evidence="1">Belongs to the DnaA family.</text>
</comment>
<keyword id="KW-0067">ATP-binding</keyword>
<keyword id="KW-0963">Cytoplasm</keyword>
<keyword id="KW-0235">DNA replication</keyword>
<keyword id="KW-0238">DNA-binding</keyword>
<keyword id="KW-0446">Lipid-binding</keyword>
<keyword id="KW-0547">Nucleotide-binding</keyword>
<evidence type="ECO:0000255" key="1">
    <source>
        <dbReference type="HAMAP-Rule" id="MF_00377"/>
    </source>
</evidence>
<reference key="1">
    <citation type="journal article" date="1992" name="Gene">
        <title>Genetic analysis of an aphid endosymbiont DNA fragment homologous to the rnpA-rpmH-dnaA-dnaN-gyrB region of eubacteria.</title>
        <authorList>
            <person name="Lai C.-Y."/>
            <person name="Baumann P."/>
        </authorList>
    </citation>
    <scope>NUCLEOTIDE SEQUENCE [GENOMIC DNA]</scope>
</reference>
<reference key="2">
    <citation type="journal article" date="1998" name="Curr. Microbiol.">
        <title>Sequence analysis of a 34.7-kb DNA segment from the genome of Buchnera aphidicola (endosymbiont of aphids) containing groEL, dnaA, the atp operon, gidA, and rho.</title>
        <authorList>
            <person name="Clark M.A."/>
            <person name="Baumann L."/>
            <person name="Baumann P."/>
        </authorList>
    </citation>
    <scope>NUCLEOTIDE SEQUENCE [GENOMIC DNA]</scope>
</reference>
<reference key="3">
    <citation type="journal article" date="2002" name="Science">
        <title>50 million years of genomic stasis in endosymbiotic bacteria.</title>
        <authorList>
            <person name="Tamas I."/>
            <person name="Klasson L."/>
            <person name="Canbaeck B."/>
            <person name="Naeslund A.K."/>
            <person name="Eriksson A.-S."/>
            <person name="Wernegreen J.J."/>
            <person name="Sandstroem J.P."/>
            <person name="Moran N.A."/>
            <person name="Andersson S.G.E."/>
        </authorList>
    </citation>
    <scope>NUCLEOTIDE SEQUENCE [LARGE SCALE GENOMIC DNA]</scope>
    <source>
        <strain>Sg</strain>
    </source>
</reference>
<dbReference type="EMBL" id="M80817">
    <property type="protein sequence ID" value="AAA73149.1"/>
    <property type="status" value="ALT_SEQ"/>
    <property type="molecule type" value="Genomic_DNA"/>
</dbReference>
<dbReference type="EMBL" id="AF008210">
    <property type="protein sequence ID" value="AAC38106.1"/>
    <property type="molecule type" value="Genomic_DNA"/>
</dbReference>
<dbReference type="EMBL" id="AE013218">
    <property type="protein sequence ID" value="AAM67584.1"/>
    <property type="molecule type" value="Genomic_DNA"/>
</dbReference>
<dbReference type="PIR" id="JC1158">
    <property type="entry name" value="IQJVBA"/>
</dbReference>
<dbReference type="RefSeq" id="WP_011053550.1">
    <property type="nucleotide sequence ID" value="NC_004061.1"/>
</dbReference>
<dbReference type="SMR" id="P29434"/>
<dbReference type="STRING" id="198804.BUsg_012"/>
<dbReference type="GeneID" id="93003474"/>
<dbReference type="KEGG" id="bas:BUsg_012"/>
<dbReference type="eggNOG" id="COG0593">
    <property type="taxonomic scope" value="Bacteria"/>
</dbReference>
<dbReference type="HOGENOM" id="CLU_026910_0_1_6"/>
<dbReference type="Proteomes" id="UP000000416">
    <property type="component" value="Chromosome"/>
</dbReference>
<dbReference type="GO" id="GO:0005737">
    <property type="term" value="C:cytoplasm"/>
    <property type="evidence" value="ECO:0007669"/>
    <property type="project" value="UniProtKB-SubCell"/>
</dbReference>
<dbReference type="GO" id="GO:0005886">
    <property type="term" value="C:plasma membrane"/>
    <property type="evidence" value="ECO:0007669"/>
    <property type="project" value="TreeGrafter"/>
</dbReference>
<dbReference type="GO" id="GO:0005524">
    <property type="term" value="F:ATP binding"/>
    <property type="evidence" value="ECO:0007669"/>
    <property type="project" value="UniProtKB-UniRule"/>
</dbReference>
<dbReference type="GO" id="GO:0016887">
    <property type="term" value="F:ATP hydrolysis activity"/>
    <property type="evidence" value="ECO:0007669"/>
    <property type="project" value="InterPro"/>
</dbReference>
<dbReference type="GO" id="GO:0003688">
    <property type="term" value="F:DNA replication origin binding"/>
    <property type="evidence" value="ECO:0007669"/>
    <property type="project" value="UniProtKB-UniRule"/>
</dbReference>
<dbReference type="GO" id="GO:0008289">
    <property type="term" value="F:lipid binding"/>
    <property type="evidence" value="ECO:0007669"/>
    <property type="project" value="UniProtKB-KW"/>
</dbReference>
<dbReference type="GO" id="GO:0006270">
    <property type="term" value="P:DNA replication initiation"/>
    <property type="evidence" value="ECO:0007669"/>
    <property type="project" value="UniProtKB-UniRule"/>
</dbReference>
<dbReference type="GO" id="GO:0006275">
    <property type="term" value="P:regulation of DNA replication"/>
    <property type="evidence" value="ECO:0007669"/>
    <property type="project" value="UniProtKB-UniRule"/>
</dbReference>
<dbReference type="CDD" id="cd00009">
    <property type="entry name" value="AAA"/>
    <property type="match status" value="1"/>
</dbReference>
<dbReference type="CDD" id="cd06571">
    <property type="entry name" value="Bac_DnaA_C"/>
    <property type="match status" value="1"/>
</dbReference>
<dbReference type="FunFam" id="1.10.1750.10:FF:000001">
    <property type="entry name" value="Chromosomal replication initiator protein DnaA"/>
    <property type="match status" value="1"/>
</dbReference>
<dbReference type="FunFam" id="1.10.8.60:FF:000003">
    <property type="entry name" value="Chromosomal replication initiator protein DnaA"/>
    <property type="match status" value="1"/>
</dbReference>
<dbReference type="FunFam" id="3.40.50.300:FF:000103">
    <property type="entry name" value="Chromosomal replication initiator protein DnaA"/>
    <property type="match status" value="1"/>
</dbReference>
<dbReference type="Gene3D" id="1.10.1750.10">
    <property type="match status" value="1"/>
</dbReference>
<dbReference type="Gene3D" id="1.10.8.60">
    <property type="match status" value="1"/>
</dbReference>
<dbReference type="Gene3D" id="3.30.300.180">
    <property type="match status" value="1"/>
</dbReference>
<dbReference type="Gene3D" id="3.40.50.300">
    <property type="entry name" value="P-loop containing nucleotide triphosphate hydrolases"/>
    <property type="match status" value="1"/>
</dbReference>
<dbReference type="HAMAP" id="MF_00377">
    <property type="entry name" value="DnaA_bact"/>
    <property type="match status" value="1"/>
</dbReference>
<dbReference type="InterPro" id="IPR003593">
    <property type="entry name" value="AAA+_ATPase"/>
</dbReference>
<dbReference type="InterPro" id="IPR001957">
    <property type="entry name" value="Chromosome_initiator_DnaA"/>
</dbReference>
<dbReference type="InterPro" id="IPR020591">
    <property type="entry name" value="Chromosome_initiator_DnaA-like"/>
</dbReference>
<dbReference type="InterPro" id="IPR018312">
    <property type="entry name" value="Chromosome_initiator_DnaA_CS"/>
</dbReference>
<dbReference type="InterPro" id="IPR013159">
    <property type="entry name" value="DnaA_C"/>
</dbReference>
<dbReference type="InterPro" id="IPR013317">
    <property type="entry name" value="DnaA_dom"/>
</dbReference>
<dbReference type="InterPro" id="IPR024633">
    <property type="entry name" value="DnaA_N_dom"/>
</dbReference>
<dbReference type="InterPro" id="IPR038454">
    <property type="entry name" value="DnaA_N_sf"/>
</dbReference>
<dbReference type="InterPro" id="IPR027417">
    <property type="entry name" value="P-loop_NTPase"/>
</dbReference>
<dbReference type="InterPro" id="IPR010921">
    <property type="entry name" value="Trp_repressor/repl_initiator"/>
</dbReference>
<dbReference type="NCBIfam" id="TIGR00362">
    <property type="entry name" value="DnaA"/>
    <property type="match status" value="1"/>
</dbReference>
<dbReference type="PANTHER" id="PTHR30050">
    <property type="entry name" value="CHROMOSOMAL REPLICATION INITIATOR PROTEIN DNAA"/>
    <property type="match status" value="1"/>
</dbReference>
<dbReference type="PANTHER" id="PTHR30050:SF2">
    <property type="entry name" value="CHROMOSOMAL REPLICATION INITIATOR PROTEIN DNAA"/>
    <property type="match status" value="1"/>
</dbReference>
<dbReference type="Pfam" id="PF00308">
    <property type="entry name" value="Bac_DnaA"/>
    <property type="match status" value="1"/>
</dbReference>
<dbReference type="Pfam" id="PF08299">
    <property type="entry name" value="Bac_DnaA_C"/>
    <property type="match status" value="1"/>
</dbReference>
<dbReference type="Pfam" id="PF11638">
    <property type="entry name" value="DnaA_N"/>
    <property type="match status" value="1"/>
</dbReference>
<dbReference type="PRINTS" id="PR00051">
    <property type="entry name" value="DNAA"/>
</dbReference>
<dbReference type="SMART" id="SM00382">
    <property type="entry name" value="AAA"/>
    <property type="match status" value="1"/>
</dbReference>
<dbReference type="SMART" id="SM00760">
    <property type="entry name" value="Bac_DnaA_C"/>
    <property type="match status" value="1"/>
</dbReference>
<dbReference type="SUPFAM" id="SSF52540">
    <property type="entry name" value="P-loop containing nucleoside triphosphate hydrolases"/>
    <property type="match status" value="1"/>
</dbReference>
<dbReference type="SUPFAM" id="SSF48295">
    <property type="entry name" value="TrpR-like"/>
    <property type="match status" value="1"/>
</dbReference>
<dbReference type="PROSITE" id="PS01008">
    <property type="entry name" value="DNAA"/>
    <property type="match status" value="1"/>
</dbReference>
<proteinExistence type="inferred from homology"/>
<organism>
    <name type="scientific">Buchnera aphidicola subsp. Schizaphis graminum (strain Sg)</name>
    <dbReference type="NCBI Taxonomy" id="198804"/>
    <lineage>
        <taxon>Bacteria</taxon>
        <taxon>Pseudomonadati</taxon>
        <taxon>Pseudomonadota</taxon>
        <taxon>Gammaproteobacteria</taxon>
        <taxon>Enterobacterales</taxon>
        <taxon>Erwiniaceae</taxon>
        <taxon>Buchnera</taxon>
    </lineage>
</organism>
<accession>P29434</accession>
<protein>
    <recommendedName>
        <fullName evidence="1">Chromosomal replication initiator protein DnaA</fullName>
    </recommendedName>
</protein>
<feature type="chain" id="PRO_0000114149" description="Chromosomal replication initiator protein DnaA">
    <location>
        <begin position="1"/>
        <end position="454"/>
    </location>
</feature>
<feature type="region of interest" description="Domain I, interacts with DnaA modulators" evidence="1">
    <location>
        <begin position="1"/>
        <end position="79"/>
    </location>
</feature>
<feature type="region of interest" description="Domain II" evidence="1">
    <location>
        <begin position="79"/>
        <end position="117"/>
    </location>
</feature>
<feature type="region of interest" description="Domain III, AAA+ region" evidence="1">
    <location>
        <begin position="118"/>
        <end position="334"/>
    </location>
</feature>
<feature type="region of interest" description="Domain IV, binds dsDNA" evidence="1">
    <location>
        <begin position="335"/>
        <end position="454"/>
    </location>
</feature>
<feature type="binding site" evidence="1">
    <location>
        <position position="162"/>
    </location>
    <ligand>
        <name>ATP</name>
        <dbReference type="ChEBI" id="CHEBI:30616"/>
    </ligand>
</feature>
<feature type="binding site" evidence="1">
    <location>
        <position position="164"/>
    </location>
    <ligand>
        <name>ATP</name>
        <dbReference type="ChEBI" id="CHEBI:30616"/>
    </ligand>
</feature>
<feature type="binding site" evidence="1">
    <location>
        <position position="165"/>
    </location>
    <ligand>
        <name>ATP</name>
        <dbReference type="ChEBI" id="CHEBI:30616"/>
    </ligand>
</feature>
<feature type="binding site" evidence="1">
    <location>
        <position position="166"/>
    </location>
    <ligand>
        <name>ATP</name>
        <dbReference type="ChEBI" id="CHEBI:30616"/>
    </ligand>
</feature>
<sequence length="454" mass="52527">MSLCLWKQCLDRLQSELPSTEFSMWIRSLKAKLNNNILEIYAPNQFILDWVKDKYLIHFKKILQDFCGSNSPFIKFKVYQTSKEKKFKKNILQKIQNLNAKPIWDKIPIFKKSSHRSNINKKHSFENFIEGKSNQLARAAASQVAKNPGNSYNPLFLYGGTGLGKTHLLHAIGNGILAYKYNVKIIYMHSERFVQDMVKALQNNAIEKFKLYYRSVDALLIDDIQFFAHKERSQEEFFHTFNALLEGNQQIILTSDRYPKEINGVEDRLKSRFGWGLTVAIDPPELETRVAILIKKADENNIVLSDEVAFFIAKHLRSNVRELEGALNRVIVNANFTHRSITVEFVREALRDILALQEKLVTIANIQKTVAEYYKIKVADLLSRRRSRSVARPRQMAMAMAKELTNHSLPEIGDAFSGRDHTTVLHACRKIEQLRKENHDIKEDFSNLIRTLSV</sequence>
<gene>
    <name evidence="1" type="primary">dnaA</name>
    <name type="ordered locus">BUsg_012</name>
</gene>